<organism>
    <name type="scientific">Debaryomyces hansenii (strain ATCC 36239 / CBS 767 / BCRC 21394 / JCM 1990 / NBRC 0083 / IGC 2968)</name>
    <name type="common">Yeast</name>
    <name type="synonym">Torulaspora hansenii</name>
    <dbReference type="NCBI Taxonomy" id="284592"/>
    <lineage>
        <taxon>Eukaryota</taxon>
        <taxon>Fungi</taxon>
        <taxon>Dikarya</taxon>
        <taxon>Ascomycota</taxon>
        <taxon>Saccharomycotina</taxon>
        <taxon>Pichiomycetes</taxon>
        <taxon>Debaryomycetaceae</taxon>
        <taxon>Debaryomyces</taxon>
    </lineage>
</organism>
<comment type="function">
    <text>ATP-dependent RNA helicase involved in 40S ribosomal subunit biogenesis. Required for the processing and cleavage of 35S pre-rRNA at sites A0, A1, and A2, leading to mature 18S rRNA.</text>
</comment>
<comment type="catalytic activity">
    <reaction>
        <text>ATP + H2O = ADP + phosphate + H(+)</text>
        <dbReference type="Rhea" id="RHEA:13065"/>
        <dbReference type="ChEBI" id="CHEBI:15377"/>
        <dbReference type="ChEBI" id="CHEBI:15378"/>
        <dbReference type="ChEBI" id="CHEBI:30616"/>
        <dbReference type="ChEBI" id="CHEBI:43474"/>
        <dbReference type="ChEBI" id="CHEBI:456216"/>
        <dbReference type="EC" id="3.6.4.13"/>
    </reaction>
</comment>
<comment type="subunit">
    <text evidence="1">Associates in the nucleolus with the 60S and pre-60S ribosomal subunits.</text>
</comment>
<comment type="subcellular location">
    <subcellularLocation>
        <location evidence="1">Nucleus</location>
        <location evidence="1">Nucleolus</location>
    </subcellularLocation>
</comment>
<comment type="domain">
    <text>The Q motif is unique to and characteristic of the DEAD box family of RNA helicases and controls ATP binding and hydrolysis.</text>
</comment>
<comment type="similarity">
    <text evidence="6">Belongs to the DEAD box helicase family. DDX18/HAS1 subfamily.</text>
</comment>
<protein>
    <recommendedName>
        <fullName>ATP-dependent RNA helicase HAS1</fullName>
        <ecNumber>3.6.4.13</ecNumber>
    </recommendedName>
</protein>
<name>HAS1_DEBHA</name>
<accession>Q6BH93</accession>
<gene>
    <name type="primary">HAS1</name>
    <name type="ordered locus">DEHA2G20372g</name>
</gene>
<dbReference type="EC" id="3.6.4.13"/>
<dbReference type="EMBL" id="CR382139">
    <property type="protein sequence ID" value="CAG90938.1"/>
    <property type="molecule type" value="Genomic_DNA"/>
</dbReference>
<dbReference type="RefSeq" id="XP_462428.1">
    <property type="nucleotide sequence ID" value="XM_462428.1"/>
</dbReference>
<dbReference type="SMR" id="Q6BH93"/>
<dbReference type="FunCoup" id="Q6BH93">
    <property type="interactions" value="1288"/>
</dbReference>
<dbReference type="STRING" id="284592.Q6BH93"/>
<dbReference type="GeneID" id="2905375"/>
<dbReference type="KEGG" id="dha:DEHA2G20372g"/>
<dbReference type="VEuPathDB" id="FungiDB:DEHA2G20372g"/>
<dbReference type="eggNOG" id="KOG0342">
    <property type="taxonomic scope" value="Eukaryota"/>
</dbReference>
<dbReference type="HOGENOM" id="CLU_003041_26_5_1"/>
<dbReference type="InParanoid" id="Q6BH93"/>
<dbReference type="OMA" id="LMEFHSQ"/>
<dbReference type="OrthoDB" id="10259640at2759"/>
<dbReference type="Proteomes" id="UP000000599">
    <property type="component" value="Chromosome G"/>
</dbReference>
<dbReference type="GO" id="GO:0005635">
    <property type="term" value="C:nuclear envelope"/>
    <property type="evidence" value="ECO:0007669"/>
    <property type="project" value="EnsemblFungi"/>
</dbReference>
<dbReference type="GO" id="GO:0005730">
    <property type="term" value="C:nucleolus"/>
    <property type="evidence" value="ECO:0007669"/>
    <property type="project" value="UniProtKB-SubCell"/>
</dbReference>
<dbReference type="GO" id="GO:0030687">
    <property type="term" value="C:preribosome, large subunit precursor"/>
    <property type="evidence" value="ECO:0007669"/>
    <property type="project" value="EnsemblFungi"/>
</dbReference>
<dbReference type="GO" id="GO:0032040">
    <property type="term" value="C:small-subunit processome"/>
    <property type="evidence" value="ECO:0007669"/>
    <property type="project" value="EnsemblFungi"/>
</dbReference>
<dbReference type="GO" id="GO:0005524">
    <property type="term" value="F:ATP binding"/>
    <property type="evidence" value="ECO:0007669"/>
    <property type="project" value="UniProtKB-KW"/>
</dbReference>
<dbReference type="GO" id="GO:0016887">
    <property type="term" value="F:ATP hydrolysis activity"/>
    <property type="evidence" value="ECO:0007669"/>
    <property type="project" value="RHEA"/>
</dbReference>
<dbReference type="GO" id="GO:0042802">
    <property type="term" value="F:identical protein binding"/>
    <property type="evidence" value="ECO:0007669"/>
    <property type="project" value="EnsemblFungi"/>
</dbReference>
<dbReference type="GO" id="GO:0003723">
    <property type="term" value="F:RNA binding"/>
    <property type="evidence" value="ECO:0007669"/>
    <property type="project" value="UniProtKB-KW"/>
</dbReference>
<dbReference type="GO" id="GO:0003724">
    <property type="term" value="F:RNA helicase activity"/>
    <property type="evidence" value="ECO:0007669"/>
    <property type="project" value="UniProtKB-EC"/>
</dbReference>
<dbReference type="GO" id="GO:0000463">
    <property type="term" value="P:maturation of LSU-rRNA from tricistronic rRNA transcript (SSU-rRNA, 5.8S rRNA, LSU-rRNA)"/>
    <property type="evidence" value="ECO:0007669"/>
    <property type="project" value="EnsemblFungi"/>
</dbReference>
<dbReference type="GO" id="GO:0000462">
    <property type="term" value="P:maturation of SSU-rRNA from tricistronic rRNA transcript (SSU-rRNA, 5.8S rRNA, LSU-rRNA)"/>
    <property type="evidence" value="ECO:0007669"/>
    <property type="project" value="EnsemblFungi"/>
</dbReference>
<dbReference type="GO" id="GO:1990417">
    <property type="term" value="P:snoRNA release from pre-rRNA"/>
    <property type="evidence" value="ECO:0007669"/>
    <property type="project" value="EnsemblFungi"/>
</dbReference>
<dbReference type="CDD" id="cd17942">
    <property type="entry name" value="DEADc_DDX18"/>
    <property type="match status" value="1"/>
</dbReference>
<dbReference type="CDD" id="cd18787">
    <property type="entry name" value="SF2_C_DEAD"/>
    <property type="match status" value="1"/>
</dbReference>
<dbReference type="FunFam" id="3.40.50.300:FF:000379">
    <property type="entry name" value="RNA helicase"/>
    <property type="match status" value="1"/>
</dbReference>
<dbReference type="FunFam" id="3.40.50.300:FF:000460">
    <property type="entry name" value="RNA helicase"/>
    <property type="match status" value="1"/>
</dbReference>
<dbReference type="Gene3D" id="3.40.50.300">
    <property type="entry name" value="P-loop containing nucleotide triphosphate hydrolases"/>
    <property type="match status" value="2"/>
</dbReference>
<dbReference type="InterPro" id="IPR044773">
    <property type="entry name" value="DDX18/Has1_DEADc"/>
</dbReference>
<dbReference type="InterPro" id="IPR011545">
    <property type="entry name" value="DEAD/DEAH_box_helicase_dom"/>
</dbReference>
<dbReference type="InterPro" id="IPR014001">
    <property type="entry name" value="Helicase_ATP-bd"/>
</dbReference>
<dbReference type="InterPro" id="IPR001650">
    <property type="entry name" value="Helicase_C-like"/>
</dbReference>
<dbReference type="InterPro" id="IPR027417">
    <property type="entry name" value="P-loop_NTPase"/>
</dbReference>
<dbReference type="InterPro" id="IPR000629">
    <property type="entry name" value="RNA-helicase_DEAD-box_CS"/>
</dbReference>
<dbReference type="InterPro" id="IPR014014">
    <property type="entry name" value="RNA_helicase_DEAD_Q_motif"/>
</dbReference>
<dbReference type="InterPro" id="IPR025313">
    <property type="entry name" value="SPB4-like_CTE"/>
</dbReference>
<dbReference type="PANTHER" id="PTHR24031">
    <property type="entry name" value="RNA HELICASE"/>
    <property type="match status" value="1"/>
</dbReference>
<dbReference type="Pfam" id="PF13959">
    <property type="entry name" value="CTE_SPB4"/>
    <property type="match status" value="1"/>
</dbReference>
<dbReference type="Pfam" id="PF00270">
    <property type="entry name" value="DEAD"/>
    <property type="match status" value="1"/>
</dbReference>
<dbReference type="Pfam" id="PF00271">
    <property type="entry name" value="Helicase_C"/>
    <property type="match status" value="1"/>
</dbReference>
<dbReference type="SMART" id="SM00487">
    <property type="entry name" value="DEXDc"/>
    <property type="match status" value="1"/>
</dbReference>
<dbReference type="SMART" id="SM01178">
    <property type="entry name" value="DUF4217"/>
    <property type="match status" value="1"/>
</dbReference>
<dbReference type="SMART" id="SM00490">
    <property type="entry name" value="HELICc"/>
    <property type="match status" value="1"/>
</dbReference>
<dbReference type="SUPFAM" id="SSF52540">
    <property type="entry name" value="P-loop containing nucleoside triphosphate hydrolases"/>
    <property type="match status" value="2"/>
</dbReference>
<dbReference type="PROSITE" id="PS00039">
    <property type="entry name" value="DEAD_ATP_HELICASE"/>
    <property type="match status" value="1"/>
</dbReference>
<dbReference type="PROSITE" id="PS51192">
    <property type="entry name" value="HELICASE_ATP_BIND_1"/>
    <property type="match status" value="1"/>
</dbReference>
<dbReference type="PROSITE" id="PS51194">
    <property type="entry name" value="HELICASE_CTER"/>
    <property type="match status" value="1"/>
</dbReference>
<dbReference type="PROSITE" id="PS51195">
    <property type="entry name" value="Q_MOTIF"/>
    <property type="match status" value="1"/>
</dbReference>
<proteinExistence type="inferred from homology"/>
<reference key="1">
    <citation type="journal article" date="2004" name="Nature">
        <title>Genome evolution in yeasts.</title>
        <authorList>
            <person name="Dujon B."/>
            <person name="Sherman D."/>
            <person name="Fischer G."/>
            <person name="Durrens P."/>
            <person name="Casaregola S."/>
            <person name="Lafontaine I."/>
            <person name="de Montigny J."/>
            <person name="Marck C."/>
            <person name="Neuveglise C."/>
            <person name="Talla E."/>
            <person name="Goffard N."/>
            <person name="Frangeul L."/>
            <person name="Aigle M."/>
            <person name="Anthouard V."/>
            <person name="Babour A."/>
            <person name="Barbe V."/>
            <person name="Barnay S."/>
            <person name="Blanchin S."/>
            <person name="Beckerich J.-M."/>
            <person name="Beyne E."/>
            <person name="Bleykasten C."/>
            <person name="Boisrame A."/>
            <person name="Boyer J."/>
            <person name="Cattolico L."/>
            <person name="Confanioleri F."/>
            <person name="de Daruvar A."/>
            <person name="Despons L."/>
            <person name="Fabre E."/>
            <person name="Fairhead C."/>
            <person name="Ferry-Dumazet H."/>
            <person name="Groppi A."/>
            <person name="Hantraye F."/>
            <person name="Hennequin C."/>
            <person name="Jauniaux N."/>
            <person name="Joyet P."/>
            <person name="Kachouri R."/>
            <person name="Kerrest A."/>
            <person name="Koszul R."/>
            <person name="Lemaire M."/>
            <person name="Lesur I."/>
            <person name="Ma L."/>
            <person name="Muller H."/>
            <person name="Nicaud J.-M."/>
            <person name="Nikolski M."/>
            <person name="Oztas S."/>
            <person name="Ozier-Kalogeropoulos O."/>
            <person name="Pellenz S."/>
            <person name="Potier S."/>
            <person name="Richard G.-F."/>
            <person name="Straub M.-L."/>
            <person name="Suleau A."/>
            <person name="Swennen D."/>
            <person name="Tekaia F."/>
            <person name="Wesolowski-Louvel M."/>
            <person name="Westhof E."/>
            <person name="Wirth B."/>
            <person name="Zeniou-Meyer M."/>
            <person name="Zivanovic Y."/>
            <person name="Bolotin-Fukuhara M."/>
            <person name="Thierry A."/>
            <person name="Bouchier C."/>
            <person name="Caudron B."/>
            <person name="Scarpelli C."/>
            <person name="Gaillardin C."/>
            <person name="Weissenbach J."/>
            <person name="Wincker P."/>
            <person name="Souciet J.-L."/>
        </authorList>
    </citation>
    <scope>NUCLEOTIDE SEQUENCE [LARGE SCALE GENOMIC DNA]</scope>
    <source>
        <strain>ATCC 36239 / CBS 767 / BCRC 21394 / JCM 1990 / NBRC 0083 / IGC 2968</strain>
    </source>
</reference>
<keyword id="KW-0067">ATP-binding</keyword>
<keyword id="KW-0175">Coiled coil</keyword>
<keyword id="KW-0347">Helicase</keyword>
<keyword id="KW-0378">Hydrolase</keyword>
<keyword id="KW-0547">Nucleotide-binding</keyword>
<keyword id="KW-0539">Nucleus</keyword>
<keyword id="KW-1185">Reference proteome</keyword>
<keyword id="KW-0690">Ribosome biogenesis</keyword>
<keyword id="KW-0694">RNA-binding</keyword>
<keyword id="KW-0698">rRNA processing</keyword>
<evidence type="ECO:0000250" key="1"/>
<evidence type="ECO:0000255" key="2"/>
<evidence type="ECO:0000255" key="3">
    <source>
        <dbReference type="PROSITE-ProRule" id="PRU00541"/>
    </source>
</evidence>
<evidence type="ECO:0000255" key="4">
    <source>
        <dbReference type="PROSITE-ProRule" id="PRU00542"/>
    </source>
</evidence>
<evidence type="ECO:0000256" key="5">
    <source>
        <dbReference type="SAM" id="MobiDB-lite"/>
    </source>
</evidence>
<evidence type="ECO:0000305" key="6"/>
<sequence>MAVSSKSKTGRSPKPAKVQPSKKVESRKREHEEESSDSSESDNEKLVEELDDDFDEVAELLGDDIKDPEAKKDKKKEKKIQEEERTRELTKPTAESNHDDIVTDNFEEAGLSEPTLKAIKDMGFSKMTQVQAKTIPPLLAGRDVLGAAKTGSGKTLAFLIPAIEMLYSLRFKPRNGTGVVVVSPTRELALQIFGVARELMAHHSQTFGIVIGGANRRQEAEKLMKGVNLLIATPGRLLDHLQNTQGFVFKNVKALVIDEADRILEIGFEEEMKQIIKILPNEDRQSMLFSATQTTKVEDLARISLRPGPLYINVASESEASTVAGLEQGYVVCESDKRFLLLFSFLKRNVKKKIIVFLSSCNCVKYFGELLNYIDLPVLDLHGKQKQQKRTNTFFEFCNATQGILICTDVAARGLDIPAVDWIIQFDPPDDPRDYIHRVGRTARGTAGKGKSLMFLTPSELGFLRYLKAANVPLNEYEFPTNKIANVQSQLTKLIKGNYWLHQSAKDGYRSYLQAYASHHLKTVYQIDKLDLVKVAKSFGFDVPPKVNITIGASGKSIEKKHKKQKRA</sequence>
<feature type="chain" id="PRO_0000232210" description="ATP-dependent RNA helicase HAS1">
    <location>
        <begin position="1"/>
        <end position="568"/>
    </location>
</feature>
<feature type="domain" description="Helicase ATP-binding" evidence="3">
    <location>
        <begin position="135"/>
        <end position="311"/>
    </location>
</feature>
<feature type="domain" description="Helicase C-terminal" evidence="4">
    <location>
        <begin position="325"/>
        <end position="495"/>
    </location>
</feature>
<feature type="region of interest" description="Disordered" evidence="5">
    <location>
        <begin position="1"/>
        <end position="100"/>
    </location>
</feature>
<feature type="coiled-coil region" evidence="2">
    <location>
        <begin position="30"/>
        <end position="91"/>
    </location>
</feature>
<feature type="short sequence motif" description="Q motif">
    <location>
        <begin position="104"/>
        <end position="132"/>
    </location>
</feature>
<feature type="short sequence motif" description="DEAD box">
    <location>
        <begin position="258"/>
        <end position="261"/>
    </location>
</feature>
<feature type="short sequence motif" description="Bipartite nuclear localization signal" evidence="1">
    <location>
        <begin position="337"/>
        <end position="353"/>
    </location>
</feature>
<feature type="compositionally biased region" description="Basic and acidic residues" evidence="5">
    <location>
        <begin position="22"/>
        <end position="32"/>
    </location>
</feature>
<feature type="compositionally biased region" description="Acidic residues" evidence="5">
    <location>
        <begin position="49"/>
        <end position="62"/>
    </location>
</feature>
<feature type="compositionally biased region" description="Basic and acidic residues" evidence="5">
    <location>
        <begin position="63"/>
        <end position="72"/>
    </location>
</feature>
<feature type="compositionally biased region" description="Basic and acidic residues" evidence="5">
    <location>
        <begin position="79"/>
        <end position="100"/>
    </location>
</feature>
<feature type="binding site" evidence="3">
    <location>
        <begin position="148"/>
        <end position="155"/>
    </location>
    <ligand>
        <name>ATP</name>
        <dbReference type="ChEBI" id="CHEBI:30616"/>
    </ligand>
</feature>